<name>ISPG_ECO27</name>
<gene>
    <name evidence="1" type="primary">ispG</name>
    <name type="ordered locus">E2348C_2798</name>
</gene>
<dbReference type="EC" id="1.17.7.3" evidence="1"/>
<dbReference type="EMBL" id="FM180568">
    <property type="protein sequence ID" value="CAS10346.1"/>
    <property type="molecule type" value="Genomic_DNA"/>
</dbReference>
<dbReference type="RefSeq" id="WP_000551807.1">
    <property type="nucleotide sequence ID" value="NC_011601.1"/>
</dbReference>
<dbReference type="SMR" id="B7UGW1"/>
<dbReference type="GeneID" id="86947404"/>
<dbReference type="KEGG" id="ecg:E2348C_2798"/>
<dbReference type="HOGENOM" id="CLU_042258_0_0_6"/>
<dbReference type="UniPathway" id="UPA00056">
    <property type="reaction ID" value="UER00096"/>
</dbReference>
<dbReference type="Proteomes" id="UP000008205">
    <property type="component" value="Chromosome"/>
</dbReference>
<dbReference type="GO" id="GO:0051539">
    <property type="term" value="F:4 iron, 4 sulfur cluster binding"/>
    <property type="evidence" value="ECO:0007669"/>
    <property type="project" value="UniProtKB-UniRule"/>
</dbReference>
<dbReference type="GO" id="GO:0046429">
    <property type="term" value="F:4-hydroxy-3-methylbut-2-en-1-yl diphosphate synthase activity (ferredoxin)"/>
    <property type="evidence" value="ECO:0007669"/>
    <property type="project" value="UniProtKB-UniRule"/>
</dbReference>
<dbReference type="GO" id="GO:0141197">
    <property type="term" value="F:4-hydroxy-3-methylbut-2-enyl-diphosphate synthase activity (flavodoxin)"/>
    <property type="evidence" value="ECO:0007669"/>
    <property type="project" value="UniProtKB-EC"/>
</dbReference>
<dbReference type="GO" id="GO:0005506">
    <property type="term" value="F:iron ion binding"/>
    <property type="evidence" value="ECO:0007669"/>
    <property type="project" value="InterPro"/>
</dbReference>
<dbReference type="GO" id="GO:0019288">
    <property type="term" value="P:isopentenyl diphosphate biosynthetic process, methylerythritol 4-phosphate pathway"/>
    <property type="evidence" value="ECO:0007669"/>
    <property type="project" value="UniProtKB-UniRule"/>
</dbReference>
<dbReference type="GO" id="GO:0016114">
    <property type="term" value="P:terpenoid biosynthetic process"/>
    <property type="evidence" value="ECO:0007669"/>
    <property type="project" value="InterPro"/>
</dbReference>
<dbReference type="FunFam" id="3.20.20.20:FF:000001">
    <property type="entry name" value="4-hydroxy-3-methylbut-2-en-1-yl diphosphate synthase (flavodoxin)"/>
    <property type="match status" value="1"/>
</dbReference>
<dbReference type="FunFam" id="3.30.413.10:FF:000002">
    <property type="entry name" value="4-hydroxy-3-methylbut-2-en-1-yl diphosphate synthase (flavodoxin)"/>
    <property type="match status" value="1"/>
</dbReference>
<dbReference type="Gene3D" id="3.20.20.20">
    <property type="entry name" value="Dihydropteroate synthase-like"/>
    <property type="match status" value="1"/>
</dbReference>
<dbReference type="Gene3D" id="3.30.413.10">
    <property type="entry name" value="Sulfite Reductase Hemoprotein, domain 1"/>
    <property type="match status" value="1"/>
</dbReference>
<dbReference type="HAMAP" id="MF_00159">
    <property type="entry name" value="IspG"/>
    <property type="match status" value="1"/>
</dbReference>
<dbReference type="InterPro" id="IPR011005">
    <property type="entry name" value="Dihydropteroate_synth-like_sf"/>
</dbReference>
<dbReference type="InterPro" id="IPR016425">
    <property type="entry name" value="IspG_bac"/>
</dbReference>
<dbReference type="InterPro" id="IPR004588">
    <property type="entry name" value="IspG_bac-typ"/>
</dbReference>
<dbReference type="InterPro" id="IPR045854">
    <property type="entry name" value="NO2/SO3_Rdtase_4Fe4S_sf"/>
</dbReference>
<dbReference type="NCBIfam" id="TIGR00612">
    <property type="entry name" value="ispG_gcpE"/>
    <property type="match status" value="1"/>
</dbReference>
<dbReference type="NCBIfam" id="NF001540">
    <property type="entry name" value="PRK00366.1"/>
    <property type="match status" value="1"/>
</dbReference>
<dbReference type="PANTHER" id="PTHR30454">
    <property type="entry name" value="4-HYDROXY-3-METHYLBUT-2-EN-1-YL DIPHOSPHATE SYNTHASE"/>
    <property type="match status" value="1"/>
</dbReference>
<dbReference type="PANTHER" id="PTHR30454:SF0">
    <property type="entry name" value="4-HYDROXY-3-METHYLBUT-2-EN-1-YL DIPHOSPHATE SYNTHASE (FERREDOXIN), CHLOROPLASTIC"/>
    <property type="match status" value="1"/>
</dbReference>
<dbReference type="Pfam" id="PF04551">
    <property type="entry name" value="GcpE"/>
    <property type="match status" value="1"/>
</dbReference>
<dbReference type="PIRSF" id="PIRSF004640">
    <property type="entry name" value="IspG"/>
    <property type="match status" value="1"/>
</dbReference>
<dbReference type="SUPFAM" id="SSF51717">
    <property type="entry name" value="Dihydropteroate synthetase-like"/>
    <property type="match status" value="1"/>
</dbReference>
<dbReference type="SUPFAM" id="SSF56014">
    <property type="entry name" value="Nitrite and sulphite reductase 4Fe-4S domain-like"/>
    <property type="match status" value="1"/>
</dbReference>
<keyword id="KW-0004">4Fe-4S</keyword>
<keyword id="KW-0408">Iron</keyword>
<keyword id="KW-0411">Iron-sulfur</keyword>
<keyword id="KW-0414">Isoprene biosynthesis</keyword>
<keyword id="KW-0479">Metal-binding</keyword>
<keyword id="KW-0560">Oxidoreductase</keyword>
<keyword id="KW-1185">Reference proteome</keyword>
<comment type="function">
    <text evidence="1">Converts 2C-methyl-D-erythritol 2,4-cyclodiphosphate (ME-2,4cPP) into 1-hydroxy-2-methyl-2-(E)-butenyl 4-diphosphate.</text>
</comment>
<comment type="catalytic activity">
    <reaction evidence="1">
        <text>(2E)-4-hydroxy-3-methylbut-2-enyl diphosphate + oxidized [flavodoxin] + H2O + 2 H(+) = 2-C-methyl-D-erythritol 2,4-cyclic diphosphate + reduced [flavodoxin]</text>
        <dbReference type="Rhea" id="RHEA:43604"/>
        <dbReference type="Rhea" id="RHEA-COMP:10622"/>
        <dbReference type="Rhea" id="RHEA-COMP:10623"/>
        <dbReference type="ChEBI" id="CHEBI:15377"/>
        <dbReference type="ChEBI" id="CHEBI:15378"/>
        <dbReference type="ChEBI" id="CHEBI:57618"/>
        <dbReference type="ChEBI" id="CHEBI:58210"/>
        <dbReference type="ChEBI" id="CHEBI:58483"/>
        <dbReference type="ChEBI" id="CHEBI:128753"/>
        <dbReference type="EC" id="1.17.7.3"/>
    </reaction>
</comment>
<comment type="cofactor">
    <cofactor evidence="1">
        <name>[4Fe-4S] cluster</name>
        <dbReference type="ChEBI" id="CHEBI:49883"/>
    </cofactor>
    <text evidence="1">Binds 1 [4Fe-4S] cluster.</text>
</comment>
<comment type="pathway">
    <text evidence="1">Isoprenoid biosynthesis; isopentenyl diphosphate biosynthesis via DXP pathway; isopentenyl diphosphate from 1-deoxy-D-xylulose 5-phosphate: step 5/6.</text>
</comment>
<comment type="similarity">
    <text evidence="1">Belongs to the IspG family.</text>
</comment>
<protein>
    <recommendedName>
        <fullName evidence="1">4-hydroxy-3-methylbut-2-en-1-yl diphosphate synthase (flavodoxin)</fullName>
        <ecNumber evidence="1">1.17.7.3</ecNumber>
    </recommendedName>
    <alternativeName>
        <fullName evidence="1">1-hydroxy-2-methyl-2-(E)-butenyl 4-diphosphate synthase</fullName>
    </alternativeName>
</protein>
<proteinExistence type="inferred from homology"/>
<sequence length="372" mass="40684">MHNQAPIQRRKSTRIYVGNVPIGDGAPIAVQSMTNTRTTDVEATVNQIKALERVGADIVRVSVPTMDAAEAFKLIKQQVNVPLVADIHFDYRIALKVAEYGVDCLRINPGNIGNEERIRMVVDCARDKNIPIRIGVNAGSLEKDLQEKYGEPTPQALLESAMRHVDHLDRLNFDQFKVSVKASDVFLAVESYRLLAKQIDQPLHLGITEAGGARSGAVKSAIGLGLLLSEGIGDTLRVSLAADPVEEIKVGFDILKSLRIRSRGINFIACPTCSRQEFDVIGTVNALEQRLEDIITPMDVSIIGCVVNGPGEALVSTLGVTGGNKKSGLYEDGVRKDRLDNNDMIDQLEARIRAKASQLDEARRIDVQQVEK</sequence>
<feature type="chain" id="PRO_1000123444" description="4-hydroxy-3-methylbut-2-en-1-yl diphosphate synthase (flavodoxin)">
    <location>
        <begin position="1"/>
        <end position="372"/>
    </location>
</feature>
<feature type="binding site" evidence="1">
    <location>
        <position position="270"/>
    </location>
    <ligand>
        <name>[4Fe-4S] cluster</name>
        <dbReference type="ChEBI" id="CHEBI:49883"/>
    </ligand>
</feature>
<feature type="binding site" evidence="1">
    <location>
        <position position="273"/>
    </location>
    <ligand>
        <name>[4Fe-4S] cluster</name>
        <dbReference type="ChEBI" id="CHEBI:49883"/>
    </ligand>
</feature>
<feature type="binding site" evidence="1">
    <location>
        <position position="305"/>
    </location>
    <ligand>
        <name>[4Fe-4S] cluster</name>
        <dbReference type="ChEBI" id="CHEBI:49883"/>
    </ligand>
</feature>
<feature type="binding site" evidence="1">
    <location>
        <position position="312"/>
    </location>
    <ligand>
        <name>[4Fe-4S] cluster</name>
        <dbReference type="ChEBI" id="CHEBI:49883"/>
    </ligand>
</feature>
<organism>
    <name type="scientific">Escherichia coli O127:H6 (strain E2348/69 / EPEC)</name>
    <dbReference type="NCBI Taxonomy" id="574521"/>
    <lineage>
        <taxon>Bacteria</taxon>
        <taxon>Pseudomonadati</taxon>
        <taxon>Pseudomonadota</taxon>
        <taxon>Gammaproteobacteria</taxon>
        <taxon>Enterobacterales</taxon>
        <taxon>Enterobacteriaceae</taxon>
        <taxon>Escherichia</taxon>
    </lineage>
</organism>
<accession>B7UGW1</accession>
<reference key="1">
    <citation type="journal article" date="2009" name="J. Bacteriol.">
        <title>Complete genome sequence and comparative genome analysis of enteropathogenic Escherichia coli O127:H6 strain E2348/69.</title>
        <authorList>
            <person name="Iguchi A."/>
            <person name="Thomson N.R."/>
            <person name="Ogura Y."/>
            <person name="Saunders D."/>
            <person name="Ooka T."/>
            <person name="Henderson I.R."/>
            <person name="Harris D."/>
            <person name="Asadulghani M."/>
            <person name="Kurokawa K."/>
            <person name="Dean P."/>
            <person name="Kenny B."/>
            <person name="Quail M.A."/>
            <person name="Thurston S."/>
            <person name="Dougan G."/>
            <person name="Hayashi T."/>
            <person name="Parkhill J."/>
            <person name="Frankel G."/>
        </authorList>
    </citation>
    <scope>NUCLEOTIDE SEQUENCE [LARGE SCALE GENOMIC DNA]</scope>
    <source>
        <strain>E2348/69 / EPEC</strain>
    </source>
</reference>
<evidence type="ECO:0000255" key="1">
    <source>
        <dbReference type="HAMAP-Rule" id="MF_00159"/>
    </source>
</evidence>